<sequence length="573" mass="62673">MAEQEYDLIVVGSGAGACWAPIRAQEQGLKTLVVEKTELFGGTSALSGGGIWIPLNYDQKTAGIKDDLETAFGYMKRCVRGMATDDRVLAYVETASKMAEYLRQIGIPYRAMAKYADYYPHIEGSRPGGRTMDPVDFNAARLRVTALETMRPGPPGNQLFGRMSISAFEAHSMLSRELKSRFTILGIMLKYFLDYPWRNKTRRDRRMTGGQALVAGLLTAANKARVEMWCNSPLKELVQDASGRVTGVIVERNGQRQQINARRGVLLGAGGFERNQEMRDQYLNKPTRLVDGNPCGRQYGDAHRAGQAWAHTGADGLVLGRAHHGCSQGAGLSRHFRGTLAAGVHGGQRQGAALPQRVRPVSGIPAAMLAENAKGNGGVPAWIVFDASFRAQNPMGPLMPGSAVPDSKVRKSWLNNVYWKGRRWKIWRADRRGRAGLQVSARRMTEYARAGKDLDFDRGGNVFDRYYGDPRLKNPNLGPIEKGPFYAMRLWPGEIGTKGGLLTDREGRVLDTQGRIIEGLYCVGNNSASVMAPAYAGAGSTLGPAMTFAFRAVADMVGKPLPLENPHLLGKTV</sequence>
<comment type="function">
    <text evidence="4">Dehydrogenates steroids by introducing a double bond in steroid ring A.</text>
</comment>
<comment type="catalytic activity">
    <reaction>
        <text>a 3-oxosteroid + A = a 3-oxo-Delta(1)-steroid + AH2</text>
        <dbReference type="Rhea" id="RHEA:13329"/>
        <dbReference type="ChEBI" id="CHEBI:13193"/>
        <dbReference type="ChEBI" id="CHEBI:17499"/>
        <dbReference type="ChEBI" id="CHEBI:20156"/>
        <dbReference type="ChEBI" id="CHEBI:47788"/>
        <dbReference type="EC" id="1.3.99.4"/>
    </reaction>
</comment>
<comment type="cofactor">
    <cofactor evidence="1">
        <name>FAD</name>
        <dbReference type="ChEBI" id="CHEBI:57692"/>
    </cofactor>
</comment>
<comment type="pathway">
    <text>Lipid metabolism; steroid degradation.</text>
</comment>
<comment type="subcellular location">
    <subcellularLocation>
        <location evidence="2">Cell inner membrane</location>
        <topology evidence="2">Peripheral membrane protein</topology>
    </subcellularLocation>
</comment>
<comment type="similarity">
    <text evidence="3">Belongs to the FAD-dependent oxidoreductase 2 family. 3-oxosteroid dehydrogenase subfamily.</text>
</comment>
<proteinExistence type="evidence at protein level"/>
<protein>
    <recommendedName>
        <fullName>3-oxosteroid 1-dehydrogenase</fullName>
        <ecNumber>1.3.99.4</ecNumber>
    </recommendedName>
</protein>
<name>3O1D_COMTE</name>
<organism>
    <name type="scientific">Comamonas testosteroni</name>
    <name type="common">Pseudomonas testosteroni</name>
    <dbReference type="NCBI Taxonomy" id="285"/>
    <lineage>
        <taxon>Bacteria</taxon>
        <taxon>Pseudomonadati</taxon>
        <taxon>Pseudomonadota</taxon>
        <taxon>Betaproteobacteria</taxon>
        <taxon>Burkholderiales</taxon>
        <taxon>Comamonadaceae</taxon>
        <taxon>Comamonas</taxon>
    </lineage>
</organism>
<evidence type="ECO:0000250" key="1"/>
<evidence type="ECO:0000269" key="2">
    <source>
    </source>
</evidence>
<evidence type="ECO:0000305" key="3"/>
<evidence type="ECO:0000305" key="4">
    <source>
    </source>
</evidence>
<accession>Q06401</accession>
<keyword id="KW-0997">Cell inner membrane</keyword>
<keyword id="KW-1003">Cell membrane</keyword>
<keyword id="KW-0274">FAD</keyword>
<keyword id="KW-0285">Flavoprotein</keyword>
<keyword id="KW-0443">Lipid metabolism</keyword>
<keyword id="KW-0472">Membrane</keyword>
<keyword id="KW-0560">Oxidoreductase</keyword>
<keyword id="KW-0753">Steroid metabolism</keyword>
<feature type="chain" id="PRO_0000064376" description="3-oxosteroid 1-dehydrogenase">
    <location>
        <begin position="1"/>
        <end position="573"/>
    </location>
</feature>
<feature type="binding site" evidence="1">
    <location>
        <begin position="7"/>
        <end position="36"/>
    </location>
    <ligand>
        <name>FAD</name>
        <dbReference type="ChEBI" id="CHEBI:57692"/>
    </ligand>
</feature>
<reference key="1">
    <citation type="journal article" date="1991" name="J. Bacteriol.">
        <title>Cloning, sequencing, and expression of the Pseudomonas testosteroni gene encoding 3-oxosteroid delta 1-dehydrogenase.</title>
        <authorList>
            <person name="Plesiat P."/>
            <person name="Grandguillot M."/>
            <person name="Harayama S."/>
            <person name="Vragar S."/>
            <person name="Michel-Briand Y."/>
        </authorList>
    </citation>
    <scope>NUCLEOTIDE SEQUENCE [GENOMIC DNA]</scope>
    <scope>FUNCTION IN THE METABOLISM OF STEROIDS</scope>
    <scope>SUBCELLULAR LOCATION</scope>
    <source>
        <strain>ATCC 17410</strain>
    </source>
</reference>
<dbReference type="EC" id="1.3.99.4"/>
<dbReference type="EMBL" id="M68488">
    <property type="protein sequence ID" value="AAA25679.1"/>
    <property type="molecule type" value="Genomic_DNA"/>
</dbReference>
<dbReference type="PIR" id="A41319">
    <property type="entry name" value="A41319"/>
</dbReference>
<dbReference type="SMR" id="Q06401"/>
<dbReference type="BRENDA" id="1.3.99.4">
    <property type="organism ID" value="1590"/>
</dbReference>
<dbReference type="UniPathway" id="UPA00722"/>
<dbReference type="GO" id="GO:0005886">
    <property type="term" value="C:plasma membrane"/>
    <property type="evidence" value="ECO:0000314"/>
    <property type="project" value="UniProtKB"/>
</dbReference>
<dbReference type="GO" id="GO:0047571">
    <property type="term" value="F:3-oxosteroid 1-dehydrogenase activity"/>
    <property type="evidence" value="ECO:0000250"/>
    <property type="project" value="UniProtKB"/>
</dbReference>
<dbReference type="GO" id="GO:0006706">
    <property type="term" value="P:steroid catabolic process"/>
    <property type="evidence" value="ECO:0007669"/>
    <property type="project" value="UniProtKB-UniPathway"/>
</dbReference>
<dbReference type="GO" id="GO:0008202">
    <property type="term" value="P:steroid metabolic process"/>
    <property type="evidence" value="ECO:0000314"/>
    <property type="project" value="UniProtKB"/>
</dbReference>
<dbReference type="FunFam" id="3.50.50.60:FF:000208">
    <property type="entry name" value="3-ketosteroid dehydrogenase"/>
    <property type="match status" value="1"/>
</dbReference>
<dbReference type="FunFam" id="3.50.50.60:FF:000240">
    <property type="entry name" value="3-ketosteroid-delta-1-dehydrogenase"/>
    <property type="match status" value="1"/>
</dbReference>
<dbReference type="FunFam" id="3.90.700.10:FF:000015">
    <property type="entry name" value="3-oxosteroid 1-dehydrogenase"/>
    <property type="match status" value="1"/>
</dbReference>
<dbReference type="Gene3D" id="3.50.50.60">
    <property type="entry name" value="FAD/NAD(P)-binding domain"/>
    <property type="match status" value="2"/>
</dbReference>
<dbReference type="Gene3D" id="3.90.700.10">
    <property type="entry name" value="Succinate dehydrogenase/fumarate reductase flavoprotein, catalytic domain"/>
    <property type="match status" value="1"/>
</dbReference>
<dbReference type="InterPro" id="IPR003953">
    <property type="entry name" value="FAD-dep_OxRdtase_2_FAD-bd"/>
</dbReference>
<dbReference type="InterPro" id="IPR050315">
    <property type="entry name" value="FAD-oxidoreductase_2"/>
</dbReference>
<dbReference type="InterPro" id="IPR036188">
    <property type="entry name" value="FAD/NAD-bd_sf"/>
</dbReference>
<dbReference type="InterPro" id="IPR027477">
    <property type="entry name" value="Succ_DH/fumarate_Rdtase_cat_sf"/>
</dbReference>
<dbReference type="PANTHER" id="PTHR43400:SF10">
    <property type="entry name" value="3-OXOSTEROID 1-DEHYDROGENASE"/>
    <property type="match status" value="1"/>
</dbReference>
<dbReference type="PANTHER" id="PTHR43400">
    <property type="entry name" value="FUMARATE REDUCTASE"/>
    <property type="match status" value="1"/>
</dbReference>
<dbReference type="Pfam" id="PF00890">
    <property type="entry name" value="FAD_binding_2"/>
    <property type="match status" value="1"/>
</dbReference>
<dbReference type="PRINTS" id="PR00411">
    <property type="entry name" value="PNDRDTASEI"/>
</dbReference>
<dbReference type="SUPFAM" id="SSF51905">
    <property type="entry name" value="FAD/NAD(P)-binding domain"/>
    <property type="match status" value="1"/>
</dbReference>
<dbReference type="SUPFAM" id="SSF56425">
    <property type="entry name" value="Succinate dehydrogenase/fumarate reductase flavoprotein, catalytic domain"/>
    <property type="match status" value="1"/>
</dbReference>